<proteinExistence type="inferred from homology"/>
<accession>A7ZQ47</accession>
<dbReference type="EC" id="2.1.1.228" evidence="1"/>
<dbReference type="EMBL" id="CP000800">
    <property type="protein sequence ID" value="ABV18301.1"/>
    <property type="molecule type" value="Genomic_DNA"/>
</dbReference>
<dbReference type="RefSeq" id="WP_000264777.1">
    <property type="nucleotide sequence ID" value="NC_009801.1"/>
</dbReference>
<dbReference type="SMR" id="A7ZQ47"/>
<dbReference type="GeneID" id="93774457"/>
<dbReference type="KEGG" id="ecw:EcE24377A_2891"/>
<dbReference type="HOGENOM" id="CLU_047363_0_1_6"/>
<dbReference type="Proteomes" id="UP000001122">
    <property type="component" value="Chromosome"/>
</dbReference>
<dbReference type="GO" id="GO:0005829">
    <property type="term" value="C:cytosol"/>
    <property type="evidence" value="ECO:0007669"/>
    <property type="project" value="TreeGrafter"/>
</dbReference>
<dbReference type="GO" id="GO:0052906">
    <property type="term" value="F:tRNA (guanine(37)-N1)-methyltransferase activity"/>
    <property type="evidence" value="ECO:0007669"/>
    <property type="project" value="UniProtKB-UniRule"/>
</dbReference>
<dbReference type="GO" id="GO:0002939">
    <property type="term" value="P:tRNA N1-guanine methylation"/>
    <property type="evidence" value="ECO:0007669"/>
    <property type="project" value="TreeGrafter"/>
</dbReference>
<dbReference type="CDD" id="cd18080">
    <property type="entry name" value="TrmD-like"/>
    <property type="match status" value="1"/>
</dbReference>
<dbReference type="FunFam" id="1.10.1270.20:FF:000001">
    <property type="entry name" value="tRNA (guanine-N(1)-)-methyltransferase"/>
    <property type="match status" value="1"/>
</dbReference>
<dbReference type="FunFam" id="3.40.1280.10:FF:000001">
    <property type="entry name" value="tRNA (guanine-N(1)-)-methyltransferase"/>
    <property type="match status" value="1"/>
</dbReference>
<dbReference type="Gene3D" id="3.40.1280.10">
    <property type="match status" value="1"/>
</dbReference>
<dbReference type="Gene3D" id="1.10.1270.20">
    <property type="entry name" value="tRNA(m1g37)methyltransferase, domain 2"/>
    <property type="match status" value="1"/>
</dbReference>
<dbReference type="HAMAP" id="MF_00605">
    <property type="entry name" value="TrmD"/>
    <property type="match status" value="1"/>
</dbReference>
<dbReference type="InterPro" id="IPR029028">
    <property type="entry name" value="Alpha/beta_knot_MTases"/>
</dbReference>
<dbReference type="InterPro" id="IPR023148">
    <property type="entry name" value="tRNA_m1G_MeTrfase_C_sf"/>
</dbReference>
<dbReference type="InterPro" id="IPR002649">
    <property type="entry name" value="tRNA_m1G_MeTrfase_TrmD"/>
</dbReference>
<dbReference type="InterPro" id="IPR029026">
    <property type="entry name" value="tRNA_m1G_MTases_N"/>
</dbReference>
<dbReference type="InterPro" id="IPR016009">
    <property type="entry name" value="tRNA_MeTrfase_TRMD/TRM10"/>
</dbReference>
<dbReference type="NCBIfam" id="NF000648">
    <property type="entry name" value="PRK00026.1"/>
    <property type="match status" value="1"/>
</dbReference>
<dbReference type="NCBIfam" id="TIGR00088">
    <property type="entry name" value="trmD"/>
    <property type="match status" value="1"/>
</dbReference>
<dbReference type="PANTHER" id="PTHR46417">
    <property type="entry name" value="TRNA (GUANINE-N(1)-)-METHYLTRANSFERASE"/>
    <property type="match status" value="1"/>
</dbReference>
<dbReference type="PANTHER" id="PTHR46417:SF1">
    <property type="entry name" value="TRNA (GUANINE-N(1)-)-METHYLTRANSFERASE"/>
    <property type="match status" value="1"/>
</dbReference>
<dbReference type="Pfam" id="PF01746">
    <property type="entry name" value="tRNA_m1G_MT"/>
    <property type="match status" value="1"/>
</dbReference>
<dbReference type="PIRSF" id="PIRSF000386">
    <property type="entry name" value="tRNA_mtase"/>
    <property type="match status" value="1"/>
</dbReference>
<dbReference type="SUPFAM" id="SSF75217">
    <property type="entry name" value="alpha/beta knot"/>
    <property type="match status" value="1"/>
</dbReference>
<evidence type="ECO:0000255" key="1">
    <source>
        <dbReference type="HAMAP-Rule" id="MF_00605"/>
    </source>
</evidence>
<sequence length="255" mass="28422">MWIGIISLFPEMFRAITDYGVTGRAVKNGLLSIQSWSPRDFTHDRHRTVDDRPYGGGPGMLMMVQPLRDAIHAAKAAAGEGAKVIYLSPQGRKLDQAGVSELATNQKLILVCGRYEGIDERVIQTEIDEEWSIGDYVLSGGELPAMTLIDSVSRFIPGVLGHEASATEDSFAEGLLDCPHYTRPEVLEGMEVPPVLLSGNHAEIRRWRLKQSLGRTWLRRPELLENLALTEEQARLLAEFKTEHAQQQHKHDGMA</sequence>
<protein>
    <recommendedName>
        <fullName evidence="1">tRNA (guanine-N(1)-)-methyltransferase</fullName>
        <ecNumber evidence="1">2.1.1.228</ecNumber>
    </recommendedName>
    <alternativeName>
        <fullName evidence="1">M1G-methyltransferase</fullName>
    </alternativeName>
    <alternativeName>
        <fullName evidence="1">tRNA [GM37] methyltransferase</fullName>
    </alternativeName>
</protein>
<keyword id="KW-0963">Cytoplasm</keyword>
<keyword id="KW-0489">Methyltransferase</keyword>
<keyword id="KW-1185">Reference proteome</keyword>
<keyword id="KW-0949">S-adenosyl-L-methionine</keyword>
<keyword id="KW-0808">Transferase</keyword>
<keyword id="KW-0819">tRNA processing</keyword>
<name>TRMD_ECO24</name>
<organism>
    <name type="scientific">Escherichia coli O139:H28 (strain E24377A / ETEC)</name>
    <dbReference type="NCBI Taxonomy" id="331111"/>
    <lineage>
        <taxon>Bacteria</taxon>
        <taxon>Pseudomonadati</taxon>
        <taxon>Pseudomonadota</taxon>
        <taxon>Gammaproteobacteria</taxon>
        <taxon>Enterobacterales</taxon>
        <taxon>Enterobacteriaceae</taxon>
        <taxon>Escherichia</taxon>
    </lineage>
</organism>
<comment type="function">
    <text evidence="1">Specifically methylates guanosine-37 in various tRNAs.</text>
</comment>
<comment type="catalytic activity">
    <reaction evidence="1">
        <text>guanosine(37) in tRNA + S-adenosyl-L-methionine = N(1)-methylguanosine(37) in tRNA + S-adenosyl-L-homocysteine + H(+)</text>
        <dbReference type="Rhea" id="RHEA:36899"/>
        <dbReference type="Rhea" id="RHEA-COMP:10145"/>
        <dbReference type="Rhea" id="RHEA-COMP:10147"/>
        <dbReference type="ChEBI" id="CHEBI:15378"/>
        <dbReference type="ChEBI" id="CHEBI:57856"/>
        <dbReference type="ChEBI" id="CHEBI:59789"/>
        <dbReference type="ChEBI" id="CHEBI:73542"/>
        <dbReference type="ChEBI" id="CHEBI:74269"/>
        <dbReference type="EC" id="2.1.1.228"/>
    </reaction>
</comment>
<comment type="subunit">
    <text evidence="1">Homodimer.</text>
</comment>
<comment type="subcellular location">
    <subcellularLocation>
        <location evidence="1">Cytoplasm</location>
    </subcellularLocation>
</comment>
<comment type="similarity">
    <text evidence="1">Belongs to the RNA methyltransferase TrmD family.</text>
</comment>
<reference key="1">
    <citation type="journal article" date="2008" name="J. Bacteriol.">
        <title>The pangenome structure of Escherichia coli: comparative genomic analysis of E. coli commensal and pathogenic isolates.</title>
        <authorList>
            <person name="Rasko D.A."/>
            <person name="Rosovitz M.J."/>
            <person name="Myers G.S.A."/>
            <person name="Mongodin E.F."/>
            <person name="Fricke W.F."/>
            <person name="Gajer P."/>
            <person name="Crabtree J."/>
            <person name="Sebaihia M."/>
            <person name="Thomson N.R."/>
            <person name="Chaudhuri R."/>
            <person name="Henderson I.R."/>
            <person name="Sperandio V."/>
            <person name="Ravel J."/>
        </authorList>
    </citation>
    <scope>NUCLEOTIDE SEQUENCE [LARGE SCALE GENOMIC DNA]</scope>
    <source>
        <strain>E24377A / ETEC</strain>
    </source>
</reference>
<feature type="chain" id="PRO_1000061269" description="tRNA (guanine-N(1)-)-methyltransferase">
    <location>
        <begin position="1"/>
        <end position="255"/>
    </location>
</feature>
<feature type="binding site" evidence="1">
    <location>
        <position position="113"/>
    </location>
    <ligand>
        <name>S-adenosyl-L-methionine</name>
        <dbReference type="ChEBI" id="CHEBI:59789"/>
    </ligand>
</feature>
<feature type="binding site" evidence="1">
    <location>
        <begin position="133"/>
        <end position="138"/>
    </location>
    <ligand>
        <name>S-adenosyl-L-methionine</name>
        <dbReference type="ChEBI" id="CHEBI:59789"/>
    </ligand>
</feature>
<gene>
    <name evidence="1" type="primary">trmD</name>
    <name type="ordered locus">EcE24377A_2891</name>
</gene>